<evidence type="ECO:0000250" key="1"/>
<evidence type="ECO:0000250" key="2">
    <source>
        <dbReference type="UniProtKB" id="P00157"/>
    </source>
</evidence>
<evidence type="ECO:0000255" key="3">
    <source>
        <dbReference type="PROSITE-ProRule" id="PRU00967"/>
    </source>
</evidence>
<evidence type="ECO:0000255" key="4">
    <source>
        <dbReference type="PROSITE-ProRule" id="PRU00968"/>
    </source>
</evidence>
<dbReference type="EMBL" id="AY926389">
    <property type="protein sequence ID" value="AAY23232.1"/>
    <property type="molecule type" value="Genomic_DNA"/>
</dbReference>
<dbReference type="SMR" id="Q508L4"/>
<dbReference type="GO" id="GO:0005743">
    <property type="term" value="C:mitochondrial inner membrane"/>
    <property type="evidence" value="ECO:0007669"/>
    <property type="project" value="UniProtKB-SubCell"/>
</dbReference>
<dbReference type="GO" id="GO:0045275">
    <property type="term" value="C:respiratory chain complex III"/>
    <property type="evidence" value="ECO:0007669"/>
    <property type="project" value="InterPro"/>
</dbReference>
<dbReference type="GO" id="GO:0046872">
    <property type="term" value="F:metal ion binding"/>
    <property type="evidence" value="ECO:0007669"/>
    <property type="project" value="UniProtKB-KW"/>
</dbReference>
<dbReference type="GO" id="GO:0008121">
    <property type="term" value="F:ubiquinol-cytochrome-c reductase activity"/>
    <property type="evidence" value="ECO:0007669"/>
    <property type="project" value="InterPro"/>
</dbReference>
<dbReference type="GO" id="GO:0006122">
    <property type="term" value="P:mitochondrial electron transport, ubiquinol to cytochrome c"/>
    <property type="evidence" value="ECO:0007669"/>
    <property type="project" value="TreeGrafter"/>
</dbReference>
<dbReference type="CDD" id="cd00290">
    <property type="entry name" value="cytochrome_b_C"/>
    <property type="match status" value="1"/>
</dbReference>
<dbReference type="CDD" id="cd00284">
    <property type="entry name" value="Cytochrome_b_N"/>
    <property type="match status" value="1"/>
</dbReference>
<dbReference type="FunFam" id="1.20.810.10:FF:000002">
    <property type="entry name" value="Cytochrome b"/>
    <property type="match status" value="1"/>
</dbReference>
<dbReference type="Gene3D" id="1.20.810.10">
    <property type="entry name" value="Cytochrome Bc1 Complex, Chain C"/>
    <property type="match status" value="1"/>
</dbReference>
<dbReference type="InterPro" id="IPR005798">
    <property type="entry name" value="Cyt_b/b6_C"/>
</dbReference>
<dbReference type="InterPro" id="IPR036150">
    <property type="entry name" value="Cyt_b/b6_C_sf"/>
</dbReference>
<dbReference type="InterPro" id="IPR005797">
    <property type="entry name" value="Cyt_b/b6_N"/>
</dbReference>
<dbReference type="InterPro" id="IPR027387">
    <property type="entry name" value="Cytb/b6-like_sf"/>
</dbReference>
<dbReference type="InterPro" id="IPR030689">
    <property type="entry name" value="Cytochrome_b"/>
</dbReference>
<dbReference type="InterPro" id="IPR048260">
    <property type="entry name" value="Cytochrome_b_C_euk/bac"/>
</dbReference>
<dbReference type="InterPro" id="IPR048259">
    <property type="entry name" value="Cytochrome_b_N_euk/bac"/>
</dbReference>
<dbReference type="InterPro" id="IPR016174">
    <property type="entry name" value="Di-haem_cyt_TM"/>
</dbReference>
<dbReference type="PANTHER" id="PTHR19271">
    <property type="entry name" value="CYTOCHROME B"/>
    <property type="match status" value="1"/>
</dbReference>
<dbReference type="PANTHER" id="PTHR19271:SF16">
    <property type="entry name" value="CYTOCHROME B"/>
    <property type="match status" value="1"/>
</dbReference>
<dbReference type="Pfam" id="PF00032">
    <property type="entry name" value="Cytochrom_B_C"/>
    <property type="match status" value="1"/>
</dbReference>
<dbReference type="Pfam" id="PF00033">
    <property type="entry name" value="Cytochrome_B"/>
    <property type="match status" value="1"/>
</dbReference>
<dbReference type="PIRSF" id="PIRSF038885">
    <property type="entry name" value="COB"/>
    <property type="match status" value="1"/>
</dbReference>
<dbReference type="SUPFAM" id="SSF81648">
    <property type="entry name" value="a domain/subunit of cytochrome bc1 complex (Ubiquinol-cytochrome c reductase)"/>
    <property type="match status" value="1"/>
</dbReference>
<dbReference type="SUPFAM" id="SSF81342">
    <property type="entry name" value="Transmembrane di-heme cytochromes"/>
    <property type="match status" value="1"/>
</dbReference>
<dbReference type="PROSITE" id="PS51003">
    <property type="entry name" value="CYTB_CTER"/>
    <property type="match status" value="1"/>
</dbReference>
<dbReference type="PROSITE" id="PS51002">
    <property type="entry name" value="CYTB_NTER"/>
    <property type="match status" value="1"/>
</dbReference>
<accession>Q508L4</accession>
<organism>
    <name type="scientific">Chaetodipus intermedius</name>
    <name type="common">Rock pocket mouse</name>
    <dbReference type="NCBI Taxonomy" id="38666"/>
    <lineage>
        <taxon>Eukaryota</taxon>
        <taxon>Metazoa</taxon>
        <taxon>Chordata</taxon>
        <taxon>Craniata</taxon>
        <taxon>Vertebrata</taxon>
        <taxon>Euteleostomi</taxon>
        <taxon>Mammalia</taxon>
        <taxon>Eutheria</taxon>
        <taxon>Euarchontoglires</taxon>
        <taxon>Glires</taxon>
        <taxon>Rodentia</taxon>
        <taxon>Castorimorpha</taxon>
        <taxon>Heteromyidae</taxon>
        <taxon>Perognathinae</taxon>
        <taxon>Chaetodipus</taxon>
    </lineage>
</organism>
<gene>
    <name type="primary">MT-CYB</name>
    <name type="synonym">COB</name>
    <name type="synonym">CYTB</name>
    <name type="synonym">MTCYB</name>
</gene>
<comment type="function">
    <text evidence="2">Component of the ubiquinol-cytochrome c reductase complex (complex III or cytochrome b-c1 complex) that is part of the mitochondrial respiratory chain. The b-c1 complex mediates electron transfer from ubiquinol to cytochrome c. Contributes to the generation of a proton gradient across the mitochondrial membrane that is then used for ATP synthesis.</text>
</comment>
<comment type="cofactor">
    <cofactor evidence="2">
        <name>heme b</name>
        <dbReference type="ChEBI" id="CHEBI:60344"/>
    </cofactor>
    <text evidence="2">Binds 2 heme b groups non-covalently.</text>
</comment>
<comment type="subunit">
    <text evidence="2">The cytochrome bc1 complex contains 11 subunits: 3 respiratory subunits (MT-CYB, CYC1 and UQCRFS1), 2 core proteins (UQCRC1 and UQCRC2) and 6 low-molecular weight proteins (UQCRH/QCR6, UQCRB/QCR7, UQCRQ/QCR8, UQCR10/QCR9, UQCR11/QCR10 and a cleavage product of UQCRFS1). This cytochrome bc1 complex then forms a dimer.</text>
</comment>
<comment type="subcellular location">
    <subcellularLocation>
        <location evidence="2">Mitochondrion inner membrane</location>
        <topology evidence="2">Multi-pass membrane protein</topology>
    </subcellularLocation>
</comment>
<comment type="miscellaneous">
    <text evidence="1">Heme 1 (or BL or b562) is low-potential and absorbs at about 562 nm, and heme 2 (or BH or b566) is high-potential and absorbs at about 566 nm.</text>
</comment>
<comment type="similarity">
    <text evidence="3 4">Belongs to the cytochrome b family.</text>
</comment>
<comment type="caution">
    <text evidence="2">The full-length protein contains only eight transmembrane helices, not nine as predicted by bioinformatics tools.</text>
</comment>
<proteinExistence type="inferred from homology"/>
<name>CYB_CHAIN</name>
<reference key="1">
    <citation type="journal article" date="2005" name="J. Mammal.">
        <title>Phylogenetics of the new world rodent family Heteromyidae.</title>
        <authorList>
            <person name="Alexander L.F."/>
            <person name="Riddle B.R."/>
        </authorList>
    </citation>
    <scope>NUCLEOTIDE SEQUENCE [GENOMIC DNA]</scope>
    <source>
        <strain>Isolate LVT 1063</strain>
    </source>
</reference>
<feature type="chain" id="PRO_0000254999" description="Cytochrome b">
    <location>
        <begin position="1"/>
        <end position="379"/>
    </location>
</feature>
<feature type="transmembrane region" description="Helical" evidence="2">
    <location>
        <begin position="33"/>
        <end position="53"/>
    </location>
</feature>
<feature type="transmembrane region" description="Helical" evidence="2">
    <location>
        <begin position="77"/>
        <end position="98"/>
    </location>
</feature>
<feature type="transmembrane region" description="Helical" evidence="2">
    <location>
        <begin position="113"/>
        <end position="133"/>
    </location>
</feature>
<feature type="transmembrane region" description="Helical" evidence="2">
    <location>
        <begin position="178"/>
        <end position="198"/>
    </location>
</feature>
<feature type="transmembrane region" description="Helical" evidence="2">
    <location>
        <begin position="226"/>
        <end position="246"/>
    </location>
</feature>
<feature type="transmembrane region" description="Helical" evidence="2">
    <location>
        <begin position="288"/>
        <end position="308"/>
    </location>
</feature>
<feature type="transmembrane region" description="Helical" evidence="2">
    <location>
        <begin position="320"/>
        <end position="340"/>
    </location>
</feature>
<feature type="transmembrane region" description="Helical" evidence="2">
    <location>
        <begin position="347"/>
        <end position="367"/>
    </location>
</feature>
<feature type="binding site" description="axial binding residue" evidence="2">
    <location>
        <position position="83"/>
    </location>
    <ligand>
        <name>heme b</name>
        <dbReference type="ChEBI" id="CHEBI:60344"/>
        <label>b562</label>
    </ligand>
    <ligandPart>
        <name>Fe</name>
        <dbReference type="ChEBI" id="CHEBI:18248"/>
    </ligandPart>
</feature>
<feature type="binding site" description="axial binding residue" evidence="2">
    <location>
        <position position="97"/>
    </location>
    <ligand>
        <name>heme b</name>
        <dbReference type="ChEBI" id="CHEBI:60344"/>
        <label>b566</label>
    </ligand>
    <ligandPart>
        <name>Fe</name>
        <dbReference type="ChEBI" id="CHEBI:18248"/>
    </ligandPart>
</feature>
<feature type="binding site" description="axial binding residue" evidence="2">
    <location>
        <position position="182"/>
    </location>
    <ligand>
        <name>heme b</name>
        <dbReference type="ChEBI" id="CHEBI:60344"/>
        <label>b562</label>
    </ligand>
    <ligandPart>
        <name>Fe</name>
        <dbReference type="ChEBI" id="CHEBI:18248"/>
    </ligandPart>
</feature>
<feature type="binding site" description="axial binding residue" evidence="2">
    <location>
        <position position="196"/>
    </location>
    <ligand>
        <name>heme b</name>
        <dbReference type="ChEBI" id="CHEBI:60344"/>
        <label>b566</label>
    </ligand>
    <ligandPart>
        <name>Fe</name>
        <dbReference type="ChEBI" id="CHEBI:18248"/>
    </ligandPart>
</feature>
<feature type="binding site" evidence="2">
    <location>
        <position position="201"/>
    </location>
    <ligand>
        <name>a ubiquinone</name>
        <dbReference type="ChEBI" id="CHEBI:16389"/>
    </ligand>
</feature>
<keyword id="KW-0249">Electron transport</keyword>
<keyword id="KW-0349">Heme</keyword>
<keyword id="KW-0408">Iron</keyword>
<keyword id="KW-0472">Membrane</keyword>
<keyword id="KW-0479">Metal-binding</keyword>
<keyword id="KW-0496">Mitochondrion</keyword>
<keyword id="KW-0999">Mitochondrion inner membrane</keyword>
<keyword id="KW-0679">Respiratory chain</keyword>
<keyword id="KW-0812">Transmembrane</keyword>
<keyword id="KW-1133">Transmembrane helix</keyword>
<keyword id="KW-0813">Transport</keyword>
<keyword id="KW-0830">Ubiquinone</keyword>
<protein>
    <recommendedName>
        <fullName>Cytochrome b</fullName>
    </recommendedName>
    <alternativeName>
        <fullName>Complex III subunit 3</fullName>
    </alternativeName>
    <alternativeName>
        <fullName>Complex III subunit III</fullName>
    </alternativeName>
    <alternativeName>
        <fullName>Cytochrome b-c1 complex subunit 3</fullName>
    </alternativeName>
    <alternativeName>
        <fullName>Ubiquinol-cytochrome-c reductase complex cytochrome b subunit</fullName>
    </alternativeName>
</protein>
<sequence length="379" mass="42706">MTIIRKTHPLMKMVNHAFIDLPAPSNISSWWNFGSLLGLCLIIQIASGLFLAMHYTSDTISAFSSVAHICRDVNYGWLIRYIHANGASLFFICLYLHIGRGIYYGSYMYKETWNVGIVLLFLTMATAFMGYILPWGQMSFWGATVITNLLSAIPYVGTSLVEWIWGGFSVDKATLTRFFAFHFILPFIIAATAMVHLLFLHETGSNNPLGIPSNSDKIPFHPYYTLKDLLGVMIILALFLTFVLFFPDLLGDPDNYSPANPLNTPPHIKPEWYFLFAYAILRSIPNKLGGVIALVLSILVLALFPLLHTANQRSMMFRPISQLLFWVLVSDLFILTWIGGQPVEPPFIIIGQIASILYFSIILVLLPVAGLIENKMLKW</sequence>
<geneLocation type="mitochondrion"/>